<feature type="chain" id="PRO_0000454503" description="Gamma-resorcylate decarboxylase">
    <location>
        <begin position="1"/>
        <end position="327"/>
    </location>
</feature>
<feature type="active site" evidence="1">
    <location>
        <position position="287"/>
    </location>
</feature>
<feature type="binding site" evidence="1">
    <location>
        <position position="8"/>
    </location>
    <ligand>
        <name>Zn(2+)</name>
        <dbReference type="ChEBI" id="CHEBI:29105"/>
    </ligand>
</feature>
<feature type="binding site" evidence="1">
    <location>
        <position position="10"/>
    </location>
    <ligand>
        <name>Zn(2+)</name>
        <dbReference type="ChEBI" id="CHEBI:29105"/>
    </ligand>
</feature>
<feature type="binding site" evidence="1">
    <location>
        <position position="164"/>
    </location>
    <ligand>
        <name>Zn(2+)</name>
        <dbReference type="ChEBI" id="CHEBI:29105"/>
    </ligand>
</feature>
<feature type="binding site" evidence="1">
    <location>
        <position position="287"/>
    </location>
    <ligand>
        <name>Zn(2+)</name>
        <dbReference type="ChEBI" id="CHEBI:29105"/>
    </ligand>
</feature>
<feature type="mutagenesis site" description="Loss of both decarboxylation and carboxylation activities." evidence="2">
    <original>H</original>
    <variation>Q</variation>
    <location>
        <position position="164"/>
    </location>
</feature>
<feature type="mutagenesis site" description="Loss of both decarboxylation and carboxylation activities." evidence="2">
    <original>H</original>
    <variation>Q</variation>
    <location>
        <position position="218"/>
    </location>
</feature>
<protein>
    <recommendedName>
        <fullName evidence="3">Gamma-resorcylate decarboxylase</fullName>
        <ecNumber evidence="2">4.1.1.103</ecNumber>
    </recommendedName>
    <alternativeName>
        <fullName evidence="3">2,6-dihydroxybenzoate decarboxylase</fullName>
    </alternativeName>
    <alternativeName>
        <fullName evidence="3">Reversible gamma-RA decarboxylase</fullName>
    </alternativeName>
</protein>
<organism>
    <name type="scientific">Rhizobium radiobacter</name>
    <name type="common">Agrobacterium tumefaciens</name>
    <name type="synonym">Agrobacterium radiobacter</name>
    <dbReference type="NCBI Taxonomy" id="358"/>
    <lineage>
        <taxon>Bacteria</taxon>
        <taxon>Pseudomonadati</taxon>
        <taxon>Pseudomonadota</taxon>
        <taxon>Alphaproteobacteria</taxon>
        <taxon>Hyphomicrobiales</taxon>
        <taxon>Rhizobiaceae</taxon>
        <taxon>Rhizobium/Agrobacterium group</taxon>
        <taxon>Agrobacterium</taxon>
        <taxon>Agrobacterium tumefaciens complex</taxon>
    </lineage>
</organism>
<accession>Q60FX6</accession>
<comment type="function">
    <text evidence="2">Involved in the gamma-resorcylate (2,6-dihydroxybenzoate) catabolism (PubMed:15474471). Catalyzes the reversible decarboxylation of gamma-resorcylate to resorcinol (PubMed:15474471). Also catalyzes the decarboxylation of 2,3-dihydroxybenzoate to catechol, but does not act on 2-hydroxybenzoic acid 3-hydroxybenzoic acid, 4-hydroxybenzoic acid, 3,4-dihydroxybenzoic acid, 2,5-dihydroxybenzoic acid, 2,3,4-trihydroxybenzoic acid, 3,4,5-trihydroxybenzoic acid, 4-aminobenzoic acid, o-hydroxyphenylacetic acid and vanillic acid (PubMed:15474471). Resorcinol and catechol can both be carboxylated by the reverse reaction (PubMed:15474471).</text>
</comment>
<comment type="catalytic activity">
    <reaction evidence="2">
        <text>2,6-dihydroxybenzoate + H(+) = resorcinol + CO2</text>
        <dbReference type="Rhea" id="RHEA:49464"/>
        <dbReference type="ChEBI" id="CHEBI:15378"/>
        <dbReference type="ChEBI" id="CHEBI:16526"/>
        <dbReference type="ChEBI" id="CHEBI:27810"/>
        <dbReference type="ChEBI" id="CHEBI:131450"/>
        <dbReference type="EC" id="4.1.1.103"/>
    </reaction>
    <physiologicalReaction direction="left-to-right" evidence="2">
        <dbReference type="Rhea" id="RHEA:49465"/>
    </physiologicalReaction>
</comment>
<comment type="catalytic activity">
    <reaction evidence="2">
        <text>2,3-dihydroxybenzoate + H(+) = catechol + CO2</text>
        <dbReference type="Rhea" id="RHEA:21492"/>
        <dbReference type="ChEBI" id="CHEBI:15378"/>
        <dbReference type="ChEBI" id="CHEBI:16526"/>
        <dbReference type="ChEBI" id="CHEBI:18135"/>
        <dbReference type="ChEBI" id="CHEBI:36654"/>
    </reaction>
</comment>
<comment type="cofactor">
    <cofactor evidence="1">
        <name>Zn(2+)</name>
        <dbReference type="ChEBI" id="CHEBI:29105"/>
    </cofactor>
    <text evidence="1">Binds 1 Zn(2+) ion per subunit.</text>
</comment>
<comment type="activity regulation">
    <text evidence="2">Insensitive to oxygen. Decarboxylation and carboxylation are inhibited by AgNO(3) and by diethyl pyrocarbonate, a histidine residue-specific inhibitor. Decarboxylation is also inhibited by HgCl(2) and activated by MgCl(2).</text>
</comment>
<comment type="biophysicochemical properties">
    <kinetics>
        <KM evidence="2">7.1 mM for gamma-resorcylate (for decarboxylation)</KM>
        <KM evidence="2">0.035 mM for resorcinol (for carboxylation)</KM>
        <KM evidence="2">0.035 mM for catechol (for carboxylation)</KM>
    </kinetics>
    <phDependence>
        <text evidence="2">Optimum pH is 7.0 for decarboxylation.</text>
    </phDependence>
    <temperatureDependence>
        <text evidence="2">Optimum temperature is 60 degrees Celsius for decarboxylation. Optimum temperature is 45 degrees Celsius for carboxylation.</text>
    </temperatureDependence>
</comment>
<comment type="pathway">
    <text evidence="4">Aromatic compound metabolism.</text>
</comment>
<comment type="subunit">
    <text evidence="2">Homotetramer.</text>
</comment>
<comment type="similarity">
    <text evidence="4">Belongs to the metallo-dependent hydrolases superfamily. ACMSD family.</text>
</comment>
<sequence length="327" mass="37431">MQGKVALEEHFAIPETLQDSAGFVPGDYWKELQHRLLDIQDTRLKLMDAHGIETMILSLNAPAVQAIPDRKKAIEIARRANDVLAEECARRPDRFLAFAALPLQDPDAATQELQRCVNDLGFVGALVNGFSQEGDGQTPLYYDLPQYRPFWGEVEKLDVPFYLHPRNPLPQDSRIYDGHPWLLGPTWAFAQETAVHALRLMASGLFDAHPRLNIILGHMGEGLPYMMWRIDHRNAWVKLPPRYPAKRRFVDYFNENFHITTSGNFRTQTLIDAILEIGADRILFSTDWPFENIDHASDWFNATTIAEADRVKIGRTNARRLFKLDGR</sequence>
<evidence type="ECO:0000250" key="1">
    <source>
        <dbReference type="UniProtKB" id="Q60GU1"/>
    </source>
</evidence>
<evidence type="ECO:0000269" key="2">
    <source>
    </source>
</evidence>
<evidence type="ECO:0000303" key="3">
    <source>
    </source>
</evidence>
<evidence type="ECO:0000305" key="4"/>
<dbReference type="EC" id="4.1.1.103" evidence="2"/>
<dbReference type="EMBL" id="AB185333">
    <property type="protein sequence ID" value="BAD61045.1"/>
    <property type="molecule type" value="Genomic_DNA"/>
</dbReference>
<dbReference type="SMR" id="Q60FX6"/>
<dbReference type="BRENDA" id="4.1.1.103">
    <property type="organism ID" value="200"/>
</dbReference>
<dbReference type="GO" id="GO:0005829">
    <property type="term" value="C:cytosol"/>
    <property type="evidence" value="ECO:0007669"/>
    <property type="project" value="TreeGrafter"/>
</dbReference>
<dbReference type="GO" id="GO:0016831">
    <property type="term" value="F:carboxy-lyase activity"/>
    <property type="evidence" value="ECO:0007669"/>
    <property type="project" value="UniProtKB-KW"/>
</dbReference>
<dbReference type="GO" id="GO:0016787">
    <property type="term" value="F:hydrolase activity"/>
    <property type="evidence" value="ECO:0007669"/>
    <property type="project" value="InterPro"/>
</dbReference>
<dbReference type="GO" id="GO:0046872">
    <property type="term" value="F:metal ion binding"/>
    <property type="evidence" value="ECO:0007669"/>
    <property type="project" value="UniProtKB-KW"/>
</dbReference>
<dbReference type="GO" id="GO:0019748">
    <property type="term" value="P:secondary metabolic process"/>
    <property type="evidence" value="ECO:0007669"/>
    <property type="project" value="TreeGrafter"/>
</dbReference>
<dbReference type="Gene3D" id="3.20.20.140">
    <property type="entry name" value="Metal-dependent hydrolases"/>
    <property type="match status" value="1"/>
</dbReference>
<dbReference type="InterPro" id="IPR032465">
    <property type="entry name" value="ACMSD"/>
</dbReference>
<dbReference type="InterPro" id="IPR006680">
    <property type="entry name" value="Amidohydro-rel"/>
</dbReference>
<dbReference type="InterPro" id="IPR032466">
    <property type="entry name" value="Metal_Hydrolase"/>
</dbReference>
<dbReference type="PANTHER" id="PTHR21240">
    <property type="entry name" value="2-AMINO-3-CARBOXYLMUCONATE-6-SEMIALDEHYDE DECARBOXYLASE"/>
    <property type="match status" value="1"/>
</dbReference>
<dbReference type="PANTHER" id="PTHR21240:SF31">
    <property type="entry name" value="AMIDOHYDROLASE FAMILY PROTEIN (AFU_ORTHOLOGUE AFUA_7G05840)"/>
    <property type="match status" value="1"/>
</dbReference>
<dbReference type="Pfam" id="PF04909">
    <property type="entry name" value="Amidohydro_2"/>
    <property type="match status" value="1"/>
</dbReference>
<dbReference type="SUPFAM" id="SSF51556">
    <property type="entry name" value="Metallo-dependent hydrolases"/>
    <property type="match status" value="1"/>
</dbReference>
<gene>
    <name evidence="3" type="primary">rdc</name>
</gene>
<reference key="1">
    <citation type="journal article" date="2004" name="Biochem. Biophys. Res. Commun.">
        <title>Reversible and nonoxidative gamma-resorcylic acid decarboxylase: characterization and gene cloning of a novel enzyme catalyzing carboxylation of resorcinol, 1,3-dihydroxybenzene, from Rhizobium radiobacter.</title>
        <authorList>
            <person name="Ishii Y."/>
            <person name="Narimatsu Y."/>
            <person name="Iwasaki Y."/>
            <person name="Arai N."/>
            <person name="Kino K."/>
            <person name="Kirimura K."/>
        </authorList>
    </citation>
    <scope>NUCLEOTIDE SEQUENCE [GENOMIC DNA]</scope>
    <scope>PROTEIN SEQUENCE OF 1-22</scope>
    <scope>FUNCTION</scope>
    <scope>CATALYTIC ACTIVITY</scope>
    <scope>ACTIVITY REGULATION</scope>
    <scope>BIOPHYSICOCHEMICAL PROPERTIES</scope>
    <scope>SUBUNIT</scope>
    <scope>MUTAGENESIS OF HIS-164 AND HIS-218</scope>
    <source>
        <strain>WU-0108</strain>
    </source>
</reference>
<proteinExistence type="evidence at protein level"/>
<keyword id="KW-0210">Decarboxylase</keyword>
<keyword id="KW-0903">Direct protein sequencing</keyword>
<keyword id="KW-0456">Lyase</keyword>
<keyword id="KW-0479">Metal-binding</keyword>
<keyword id="KW-0862">Zinc</keyword>
<name>GRDC_RHIRD</name>